<dbReference type="EC" id="2.7.11.1" evidence="1"/>
<dbReference type="EMBL" id="AC157910">
    <property type="status" value="NOT_ANNOTATED_CDS"/>
    <property type="molecule type" value="Genomic_DNA"/>
</dbReference>
<dbReference type="EMBL" id="AY044451">
    <property type="protein sequence ID" value="AAK95953.1"/>
    <property type="molecule type" value="mRNA"/>
</dbReference>
<dbReference type="CCDS" id="CCDS50310.1"/>
<dbReference type="RefSeq" id="NP_001032371.1">
    <property type="nucleotide sequence ID" value="NM_001037294.1"/>
</dbReference>
<dbReference type="SMR" id="Q91ZB0"/>
<dbReference type="BioGRID" id="230413">
    <property type="interactions" value="1"/>
</dbReference>
<dbReference type="FunCoup" id="Q91ZB0">
    <property type="interactions" value="20"/>
</dbReference>
<dbReference type="STRING" id="10090.ENSMUSP00000048752"/>
<dbReference type="iPTMnet" id="Q91ZB0"/>
<dbReference type="PhosphoSitePlus" id="Q91ZB0"/>
<dbReference type="PaxDb" id="10090-ENSMUSP00000048752"/>
<dbReference type="ProteomicsDB" id="296177"/>
<dbReference type="Antibodypedia" id="22947">
    <property type="antibodies" value="94 antibodies from 23 providers"/>
</dbReference>
<dbReference type="DNASU" id="225638"/>
<dbReference type="Ensembl" id="ENSMUST00000035548.16">
    <property type="protein sequence ID" value="ENSMUSP00000048752.8"/>
    <property type="gene ID" value="ENSMUSG00000032845.17"/>
</dbReference>
<dbReference type="GeneID" id="225638"/>
<dbReference type="KEGG" id="mmu:225638"/>
<dbReference type="UCSC" id="uc008feu.3">
    <property type="organism name" value="mouse"/>
</dbReference>
<dbReference type="AGR" id="MGI:2449492"/>
<dbReference type="CTD" id="115701"/>
<dbReference type="MGI" id="MGI:2449492">
    <property type="gene designation" value="Alpk2"/>
</dbReference>
<dbReference type="VEuPathDB" id="HostDB:ENSMUSG00000032845"/>
<dbReference type="eggNOG" id="ENOG502QPP5">
    <property type="taxonomic scope" value="Eukaryota"/>
</dbReference>
<dbReference type="GeneTree" id="ENSGT00940000160524"/>
<dbReference type="HOGENOM" id="CLU_002011_0_0_1"/>
<dbReference type="InParanoid" id="Q91ZB0"/>
<dbReference type="OMA" id="RETSHTT"/>
<dbReference type="OrthoDB" id="301415at2759"/>
<dbReference type="TreeFam" id="TF332629"/>
<dbReference type="BioGRID-ORCS" id="225638">
    <property type="hits" value="4 hits in 81 CRISPR screens"/>
</dbReference>
<dbReference type="ChiTaRS" id="Alpk2">
    <property type="organism name" value="mouse"/>
</dbReference>
<dbReference type="PRO" id="PR:Q91ZB0"/>
<dbReference type="Proteomes" id="UP000000589">
    <property type="component" value="Chromosome 18"/>
</dbReference>
<dbReference type="RNAct" id="Q91ZB0">
    <property type="molecule type" value="protein"/>
</dbReference>
<dbReference type="Bgee" id="ENSMUSG00000032845">
    <property type="expression patterns" value="Expressed in heart right ventricle and 75 other cell types or tissues"/>
</dbReference>
<dbReference type="ExpressionAtlas" id="Q91ZB0">
    <property type="expression patterns" value="baseline and differential"/>
</dbReference>
<dbReference type="GO" id="GO:0016323">
    <property type="term" value="C:basolateral plasma membrane"/>
    <property type="evidence" value="ECO:0007669"/>
    <property type="project" value="UniProtKB-SubCell"/>
</dbReference>
<dbReference type="GO" id="GO:0005524">
    <property type="term" value="F:ATP binding"/>
    <property type="evidence" value="ECO:0007669"/>
    <property type="project" value="InterPro"/>
</dbReference>
<dbReference type="GO" id="GO:0106310">
    <property type="term" value="F:protein serine kinase activity"/>
    <property type="evidence" value="ECO:0007669"/>
    <property type="project" value="RHEA"/>
</dbReference>
<dbReference type="GO" id="GO:0004674">
    <property type="term" value="F:protein serine/threonine kinase activity"/>
    <property type="evidence" value="ECO:0007669"/>
    <property type="project" value="UniProtKB-KW"/>
</dbReference>
<dbReference type="GO" id="GO:0055013">
    <property type="term" value="P:cardiac muscle cell development"/>
    <property type="evidence" value="ECO:0000250"/>
    <property type="project" value="UniProtKB"/>
</dbReference>
<dbReference type="GO" id="GO:1905223">
    <property type="term" value="P:epicardium morphogenesis"/>
    <property type="evidence" value="ECO:0000250"/>
    <property type="project" value="UniProtKB"/>
</dbReference>
<dbReference type="GO" id="GO:0030010">
    <property type="term" value="P:establishment of cell polarity"/>
    <property type="evidence" value="ECO:0000250"/>
    <property type="project" value="UniProtKB"/>
</dbReference>
<dbReference type="GO" id="GO:0003007">
    <property type="term" value="P:heart morphogenesis"/>
    <property type="evidence" value="ECO:0000250"/>
    <property type="project" value="UniProtKB"/>
</dbReference>
<dbReference type="GO" id="GO:0003308">
    <property type="term" value="P:negative regulation of Wnt signaling pathway involved in heart development"/>
    <property type="evidence" value="ECO:0007669"/>
    <property type="project" value="Ensembl"/>
</dbReference>
<dbReference type="GO" id="GO:0042981">
    <property type="term" value="P:regulation of apoptotic process"/>
    <property type="evidence" value="ECO:0000250"/>
    <property type="project" value="UniProtKB"/>
</dbReference>
<dbReference type="GO" id="GO:0010468">
    <property type="term" value="P:regulation of gene expression"/>
    <property type="evidence" value="ECO:0000250"/>
    <property type="project" value="UniProtKB"/>
</dbReference>
<dbReference type="CDD" id="cd16974">
    <property type="entry name" value="Alpha_kinase_ALPK2"/>
    <property type="match status" value="1"/>
</dbReference>
<dbReference type="FunFam" id="3.20.200.10:FF:000005">
    <property type="entry name" value="Alpha-protein kinase 2"/>
    <property type="match status" value="1"/>
</dbReference>
<dbReference type="FunFam" id="2.60.40.10:FF:000032">
    <property type="entry name" value="palladin isoform X1"/>
    <property type="match status" value="1"/>
</dbReference>
<dbReference type="Gene3D" id="2.60.40.10">
    <property type="entry name" value="Immunoglobulins"/>
    <property type="match status" value="2"/>
</dbReference>
<dbReference type="Gene3D" id="3.20.200.10">
    <property type="entry name" value="MHCK/EF2 kinase"/>
    <property type="match status" value="1"/>
</dbReference>
<dbReference type="InterPro" id="IPR004166">
    <property type="entry name" value="a-kinase_dom"/>
</dbReference>
<dbReference type="InterPro" id="IPR007110">
    <property type="entry name" value="Ig-like_dom"/>
</dbReference>
<dbReference type="InterPro" id="IPR036179">
    <property type="entry name" value="Ig-like_dom_sf"/>
</dbReference>
<dbReference type="InterPro" id="IPR013783">
    <property type="entry name" value="Ig-like_fold"/>
</dbReference>
<dbReference type="InterPro" id="IPR013098">
    <property type="entry name" value="Ig_I-set"/>
</dbReference>
<dbReference type="InterPro" id="IPR003599">
    <property type="entry name" value="Ig_sub"/>
</dbReference>
<dbReference type="InterPro" id="IPR003598">
    <property type="entry name" value="Ig_sub2"/>
</dbReference>
<dbReference type="InterPro" id="IPR011009">
    <property type="entry name" value="Kinase-like_dom_sf"/>
</dbReference>
<dbReference type="PANTHER" id="PTHR47091:SF2">
    <property type="entry name" value="ALPHA-PROTEIN KINASE 2"/>
    <property type="match status" value="1"/>
</dbReference>
<dbReference type="PANTHER" id="PTHR47091">
    <property type="entry name" value="ALPHA-PROTEIN KINASE 2-RELATED"/>
    <property type="match status" value="1"/>
</dbReference>
<dbReference type="Pfam" id="PF02816">
    <property type="entry name" value="Alpha_kinase"/>
    <property type="match status" value="1"/>
</dbReference>
<dbReference type="Pfam" id="PF07679">
    <property type="entry name" value="I-set"/>
    <property type="match status" value="2"/>
</dbReference>
<dbReference type="SMART" id="SM00811">
    <property type="entry name" value="Alpha_kinase"/>
    <property type="match status" value="1"/>
</dbReference>
<dbReference type="SMART" id="SM00409">
    <property type="entry name" value="IG"/>
    <property type="match status" value="2"/>
</dbReference>
<dbReference type="SMART" id="SM00408">
    <property type="entry name" value="IGc2"/>
    <property type="match status" value="2"/>
</dbReference>
<dbReference type="SUPFAM" id="SSF48726">
    <property type="entry name" value="Immunoglobulin"/>
    <property type="match status" value="2"/>
</dbReference>
<dbReference type="SUPFAM" id="SSF56112">
    <property type="entry name" value="Protein kinase-like (PK-like)"/>
    <property type="match status" value="1"/>
</dbReference>
<dbReference type="PROSITE" id="PS51158">
    <property type="entry name" value="ALPHA_KINASE"/>
    <property type="match status" value="1"/>
</dbReference>
<dbReference type="PROSITE" id="PS50835">
    <property type="entry name" value="IG_LIKE"/>
    <property type="match status" value="2"/>
</dbReference>
<feature type="chain" id="PRO_0000291383" description="Alpha-protein kinase 2">
    <location>
        <begin position="1"/>
        <end position="2144"/>
    </location>
</feature>
<feature type="domain" description="Ig-like 1">
    <location>
        <begin position="7"/>
        <end position="105"/>
    </location>
</feature>
<feature type="domain" description="Ig-like 2">
    <location>
        <begin position="1759"/>
        <end position="1847"/>
    </location>
</feature>
<feature type="domain" description="Alpha-type protein kinase" evidence="3">
    <location>
        <begin position="1874"/>
        <end position="2106"/>
    </location>
</feature>
<feature type="region of interest" description="Disordered" evidence="4">
    <location>
        <begin position="425"/>
        <end position="473"/>
    </location>
</feature>
<feature type="region of interest" description="Disordered" evidence="4">
    <location>
        <begin position="500"/>
        <end position="575"/>
    </location>
</feature>
<feature type="region of interest" description="Disordered" evidence="4">
    <location>
        <begin position="727"/>
        <end position="775"/>
    </location>
</feature>
<feature type="region of interest" description="Disordered" evidence="4">
    <location>
        <begin position="845"/>
        <end position="864"/>
    </location>
</feature>
<feature type="region of interest" description="Disordered" evidence="4">
    <location>
        <begin position="881"/>
        <end position="907"/>
    </location>
</feature>
<feature type="region of interest" description="Disordered" evidence="4">
    <location>
        <begin position="1011"/>
        <end position="1065"/>
    </location>
</feature>
<feature type="region of interest" description="Disordered" evidence="4">
    <location>
        <begin position="1316"/>
        <end position="1340"/>
    </location>
</feature>
<feature type="region of interest" description="Disordered" evidence="4">
    <location>
        <begin position="1471"/>
        <end position="1509"/>
    </location>
</feature>
<feature type="region of interest" description="Disordered" evidence="4">
    <location>
        <begin position="1565"/>
        <end position="1587"/>
    </location>
</feature>
<feature type="region of interest" description="Disordered" evidence="4">
    <location>
        <begin position="1629"/>
        <end position="1696"/>
    </location>
</feature>
<feature type="region of interest" description="Disordered" evidence="4">
    <location>
        <begin position="1720"/>
        <end position="1754"/>
    </location>
</feature>
<feature type="region of interest" description="Disordered" evidence="4">
    <location>
        <begin position="2109"/>
        <end position="2144"/>
    </location>
</feature>
<feature type="compositionally biased region" description="Basic and acidic residues" evidence="4">
    <location>
        <begin position="500"/>
        <end position="511"/>
    </location>
</feature>
<feature type="compositionally biased region" description="Basic and acidic residues" evidence="4">
    <location>
        <begin position="853"/>
        <end position="864"/>
    </location>
</feature>
<feature type="compositionally biased region" description="Polar residues" evidence="4">
    <location>
        <begin position="897"/>
        <end position="906"/>
    </location>
</feature>
<feature type="compositionally biased region" description="Polar residues" evidence="4">
    <location>
        <begin position="1574"/>
        <end position="1587"/>
    </location>
</feature>
<feature type="compositionally biased region" description="Basic and acidic residues" evidence="4">
    <location>
        <begin position="1631"/>
        <end position="1645"/>
    </location>
</feature>
<feature type="compositionally biased region" description="Basic and acidic residues" evidence="4">
    <location>
        <begin position="1732"/>
        <end position="1754"/>
    </location>
</feature>
<feature type="disulfide bond" evidence="2">
    <location>
        <begin position="33"/>
        <end position="98"/>
    </location>
</feature>
<feature type="disulfide bond" evidence="2">
    <location>
        <begin position="1781"/>
        <end position="1831"/>
    </location>
</feature>
<feature type="sequence conflict" description="In Ref. 2; AAK95953." evidence="6" ref="2">
    <original>TH</original>
    <variation>VD</variation>
    <location>
        <begin position="670"/>
        <end position="671"/>
    </location>
</feature>
<feature type="sequence conflict" description="In Ref. 2; AAK95953." evidence="6" ref="2">
    <original>S</original>
    <variation>Y</variation>
    <location>
        <position position="849"/>
    </location>
</feature>
<feature type="sequence conflict" description="In Ref. 2; AAK95953." evidence="6" ref="2">
    <original>I</original>
    <variation>M</variation>
    <location>
        <position position="1354"/>
    </location>
</feature>
<feature type="sequence conflict" description="In Ref. 2; AAK95953." evidence="6" ref="2">
    <original>A</original>
    <variation>V</variation>
    <location>
        <position position="1710"/>
    </location>
</feature>
<feature type="sequence conflict" description="In Ref. 2; AAK95953." evidence="6" ref="2">
    <original>K</original>
    <variation>R</variation>
    <location>
        <position position="2114"/>
    </location>
</feature>
<sequence length="2144" mass="233298">MTDPGCPERRTLCFLSTLLSQKVPEKSDVVLRCMIAGQPKPEVTWYKNGQAIDLGGTVSSYEFFENQYIHLLHLSCCTQSDAAVYQVSARNCVGMICCSASLEVQCLQDPQVSPDPGGGRDAAGECKTEIREEDSINHTDEKWNPCKKGESTADSFLDKFNHLSSPQIVARGDSGASNSENPQYIKETRQRMGQYNSNNMQENSFNSNNTAEKQDVSQLWTVNATVPGLVSDGLGYEESNESVSPSHQTPKVQKYISFSLPLPETTLGPYPEDSNSINMQPGPQVSSEDSDSDYELCPEITLTYTEEFSDDDLEYLECSDVMTDYSNAVWQRSLQGTDRVFLLESDDEEMEFNECGLGGCEHFFTEMGCGPQVSGGMWSMNVATGFCSYHSQPQEVRVRSSGTSGHSPLPLHSEMTLTLGPHQDETAKMTEPGRAPLPTAPEAVENDCSGIRGETRDNPEAGEEFSGDNLQTMDKVETEASVKPLSGGSDKTEVKQGLESLARERTDEKYPGSKKAALRPTRARRPGMKANTKKQLLRDSAPKGTLDLLPKEPTRQPLPGSYGQEPTHTEAGAPGWDSHFHAEVCIPLPAEQDSKILRPPADPLSKEEDSSFEGGGALLNKLFEASQIPDRTDHLQMQIQETIGESSSLDQMLAFSVPAEESSTFAGATTHSVSNLSEINRENLSLAQYPGLESCPQSLQQEGRPNRDRDLPGALWAESACELSLLEDNEEEESQPPASVALPQGDGVPCREPEGLSDSFPQPTAPSLPLENVGSGSRVREAAGGVGCFEAGDQETCYATMDLLVGAPVDKYLPQEICPEDLELTEGQSEVCDLCSPDKILAVLQTQGSEPPRSTDKRSQDGKSAEGLLFNSTFTWDTAKEASEDAVGETAADVENPPSTFSSTLPYSERGFGETQPLCSETISFVKDSEGSYRSSSLSIPAAIDTLASYSSDRECSKEQSAESTANVDCHQVTREMEGISTNAAEVHEIKCHSVSVPQDNDFDVGADQVSCEARDEDNSQSLPDDDSQSGRSLSSSTGEATGETLVPAPSSAGDHGHFSMPEGQGLCSRALQMDNQPVCQSQAMEGAHSRGLEEHFQEKGSGMKHGIRPQSTSHQVSLSANDFQEILPSIPTMQQETNVEPLEHSLADSREEIECSSDPRTSDLVVAEKTVGEDSHLVVSVPALPDILLGEKDDVGLGSWAVGGKVKIITLEAPVFEIWPPELVRHPGYKEAEAGLTMPGRSWALSDILRAGATRSEPGALGGAAWVPSPQADALMALGANRDTWLGAAPDRQANCNCLSSQCLSQPRFLESSVDPVEDKELEVTDSPSEVSKTGEMEMPETLNEEQEETQQILRHPAVVNQSVNFPRILESSVDPIDDRGELEGVWPEKPEPSDSSVEGNEFIVGNTCQRVDIQPASLQLPHPQDSGEIIPYEHTTNQNRVDGERAEAKTSLPDKAKAEAEAVVWQAQGPGEEGQGIPSVCSMSQTQDGGDRSLGEAGQRGTDETEVISPLSPLSSCLTGVTHTCVKAETNNSTGHIYGGSEPRTRQSVIPMKTEKGTIESKCGNHVRSSDDLTNTPCTSSPKGNVTRLSISHGLEELKSEKLQIAETKPLNSSDSPTMTLALISGECESEKDPKSLLRRDPCPKGSTLDSGKKSRDQQQKPVAAQVSKAPGDQSAMAGSEEGKKKQEASGSGHLTAGIKKKILSRVAALRLRLEEKENSRKNSIVKKTPKFERSLSRTDEKRDPKRAPCKAEGKAPVLLKRIQAEMAPEHSGNIKLSCQFSEIHEDSTVCWTKDSKSIAQAKKSAGDNSSVSLAIVQAGQKDQGLYYCCLKNSYGKVTAEFNLTAEVLKQLSSHTEYRGCEEIEFSQLIFKEDVFNDSYFGDHLRGQISTEELHFGEGVHRKAFRSKVMQGLMPVFQPGHACVLKVHNAVAHGTRNNDELVQRNYKLAAQECYVQNTARYYAKIYAAEAQPLEGFGEVPEIIPIFLIHRPENNIPYATVEEELIGEFVKYSIRDGKEINFLRRDSEAGQKCCTFQHWVYQKTSGCLLVTDMQGVGMKLTDVGIATLARGYKGFKGNCSMTFIDQFRALHQCNKYCKMLGLKSLQNNSQKPKKPIVGKGRVPTNATQVKTPESETPPAERKT</sequence>
<proteinExistence type="evidence at transcript level"/>
<reference key="1">
    <citation type="journal article" date="2009" name="PLoS Biol.">
        <title>Lineage-specific biology revealed by a finished genome assembly of the mouse.</title>
        <authorList>
            <person name="Church D.M."/>
            <person name="Goodstadt L."/>
            <person name="Hillier L.W."/>
            <person name="Zody M.C."/>
            <person name="Goldstein S."/>
            <person name="She X."/>
            <person name="Bult C.J."/>
            <person name="Agarwala R."/>
            <person name="Cherry J.L."/>
            <person name="DiCuccio M."/>
            <person name="Hlavina W."/>
            <person name="Kapustin Y."/>
            <person name="Meric P."/>
            <person name="Maglott D."/>
            <person name="Birtle Z."/>
            <person name="Marques A.C."/>
            <person name="Graves T."/>
            <person name="Zhou S."/>
            <person name="Teague B."/>
            <person name="Potamousis K."/>
            <person name="Churas C."/>
            <person name="Place M."/>
            <person name="Herschleb J."/>
            <person name="Runnheim R."/>
            <person name="Forrest D."/>
            <person name="Amos-Landgraf J."/>
            <person name="Schwartz D.C."/>
            <person name="Cheng Z."/>
            <person name="Lindblad-Toh K."/>
            <person name="Eichler E.E."/>
            <person name="Ponting C.P."/>
        </authorList>
    </citation>
    <scope>NUCLEOTIDE SEQUENCE [LARGE SCALE GENOMIC DNA]</scope>
    <source>
        <strain>C57BL/6J</strain>
    </source>
</reference>
<reference evidence="6 7" key="2">
    <citation type="journal article" date="1999" name="Curr. Biol.">
        <title>Alpha-kinases: a new class of protein kinases with a novel catalytic domain.</title>
        <authorList>
            <person name="Ryazanov A.G."/>
            <person name="Pavur K.S."/>
            <person name="Dorovkov M.V."/>
        </authorList>
    </citation>
    <scope>NUCLEOTIDE SEQUENCE [MRNA] OF 670-2144</scope>
</reference>
<name>ALPK2_MOUSE</name>
<protein>
    <recommendedName>
        <fullName evidence="6">Alpha-protein kinase 2</fullName>
        <ecNumber evidence="1">2.7.11.1</ecNumber>
    </recommendedName>
    <alternativeName>
        <fullName evidence="5">Heart alpha-protein kinase</fullName>
    </alternativeName>
</protein>
<accession>Q91ZB0</accession>
<accession>E9QL35</accession>
<comment type="function">
    <text evidence="1 5">Protein kinase that recognizes phosphorylation sites in which the surrounding peptides have an alpha-helical conformation (PubMed:10021370). Regulates cardiac development and cardiomyocyte differentiation by negatively regulating Wnt/beta-catenin signaling (By similarity).</text>
</comment>
<comment type="catalytic activity">
    <reaction evidence="1">
        <text>L-seryl-[protein] + ATP = O-phospho-L-seryl-[protein] + ADP + H(+)</text>
        <dbReference type="Rhea" id="RHEA:17989"/>
        <dbReference type="Rhea" id="RHEA-COMP:9863"/>
        <dbReference type="Rhea" id="RHEA-COMP:11604"/>
        <dbReference type="ChEBI" id="CHEBI:15378"/>
        <dbReference type="ChEBI" id="CHEBI:29999"/>
        <dbReference type="ChEBI" id="CHEBI:30616"/>
        <dbReference type="ChEBI" id="CHEBI:83421"/>
        <dbReference type="ChEBI" id="CHEBI:456216"/>
        <dbReference type="EC" id="2.7.11.1"/>
    </reaction>
</comment>
<comment type="catalytic activity">
    <reaction evidence="6">
        <text>L-threonyl-[protein] + ATP = O-phospho-L-threonyl-[protein] + ADP + H(+)</text>
        <dbReference type="Rhea" id="RHEA:46608"/>
        <dbReference type="Rhea" id="RHEA-COMP:11060"/>
        <dbReference type="Rhea" id="RHEA-COMP:11605"/>
        <dbReference type="ChEBI" id="CHEBI:15378"/>
        <dbReference type="ChEBI" id="CHEBI:30013"/>
        <dbReference type="ChEBI" id="CHEBI:30616"/>
        <dbReference type="ChEBI" id="CHEBI:61977"/>
        <dbReference type="ChEBI" id="CHEBI:456216"/>
        <dbReference type="EC" id="2.7.11.1"/>
    </reaction>
</comment>
<comment type="subcellular location">
    <subcellularLocation>
        <location evidence="1">Basolateral cell membrane</location>
    </subcellularLocation>
</comment>
<comment type="similarity">
    <text evidence="6">Belongs to the protein kinase superfamily. Alpha-type protein kinase family. ALPK subfamily.</text>
</comment>
<evidence type="ECO:0000250" key="1">
    <source>
        <dbReference type="UniProtKB" id="Q86TB3"/>
    </source>
</evidence>
<evidence type="ECO:0000255" key="2">
    <source>
        <dbReference type="PROSITE-ProRule" id="PRU00114"/>
    </source>
</evidence>
<evidence type="ECO:0000255" key="3">
    <source>
        <dbReference type="PROSITE-ProRule" id="PRU00501"/>
    </source>
</evidence>
<evidence type="ECO:0000256" key="4">
    <source>
        <dbReference type="SAM" id="MobiDB-lite"/>
    </source>
</evidence>
<evidence type="ECO:0000303" key="5">
    <source>
    </source>
</evidence>
<evidence type="ECO:0000305" key="6"/>
<evidence type="ECO:0000312" key="7">
    <source>
        <dbReference type="EMBL" id="AAK95953.1"/>
    </source>
</evidence>
<evidence type="ECO:0000312" key="8">
    <source>
        <dbReference type="MGI" id="MGI:2449492"/>
    </source>
</evidence>
<keyword id="KW-1003">Cell membrane</keyword>
<keyword id="KW-1015">Disulfide bond</keyword>
<keyword id="KW-0393">Immunoglobulin domain</keyword>
<keyword id="KW-0418">Kinase</keyword>
<keyword id="KW-0472">Membrane</keyword>
<keyword id="KW-1185">Reference proteome</keyword>
<keyword id="KW-0677">Repeat</keyword>
<keyword id="KW-0723">Serine/threonine-protein kinase</keyword>
<keyword id="KW-0808">Transferase</keyword>
<gene>
    <name evidence="8" type="primary">Alpk2</name>
    <name evidence="8" type="synonym">Hak</name>
</gene>
<organism>
    <name type="scientific">Mus musculus</name>
    <name type="common">Mouse</name>
    <dbReference type="NCBI Taxonomy" id="10090"/>
    <lineage>
        <taxon>Eukaryota</taxon>
        <taxon>Metazoa</taxon>
        <taxon>Chordata</taxon>
        <taxon>Craniata</taxon>
        <taxon>Vertebrata</taxon>
        <taxon>Euteleostomi</taxon>
        <taxon>Mammalia</taxon>
        <taxon>Eutheria</taxon>
        <taxon>Euarchontoglires</taxon>
        <taxon>Glires</taxon>
        <taxon>Rodentia</taxon>
        <taxon>Myomorpha</taxon>
        <taxon>Muroidea</taxon>
        <taxon>Muridae</taxon>
        <taxon>Murinae</taxon>
        <taxon>Mus</taxon>
        <taxon>Mus</taxon>
    </lineage>
</organism>